<evidence type="ECO:0000250" key="1">
    <source>
        <dbReference type="UniProtKB" id="O66659"/>
    </source>
</evidence>
<evidence type="ECO:0000255" key="2">
    <source>
        <dbReference type="HAMAP-Rule" id="MF_00377"/>
    </source>
</evidence>
<evidence type="ECO:0000256" key="3">
    <source>
        <dbReference type="SAM" id="MobiDB-lite"/>
    </source>
</evidence>
<evidence type="ECO:0000269" key="4">
    <source>
    </source>
</evidence>
<evidence type="ECO:0000269" key="5">
    <source>
    </source>
</evidence>
<evidence type="ECO:0000269" key="6">
    <source>
    </source>
</evidence>
<evidence type="ECO:0000269" key="7">
    <source>
    </source>
</evidence>
<evidence type="ECO:0000269" key="8">
    <source>
    </source>
</evidence>
<evidence type="ECO:0000269" key="9">
    <source>
    </source>
</evidence>
<evidence type="ECO:0000269" key="10">
    <source>
    </source>
</evidence>
<evidence type="ECO:0000269" key="11">
    <source>
    </source>
</evidence>
<evidence type="ECO:0000269" key="12">
    <source>
    </source>
</evidence>
<evidence type="ECO:0000269" key="13">
    <source>
    </source>
</evidence>
<evidence type="ECO:0000269" key="14">
    <source>
    </source>
</evidence>
<evidence type="ECO:0000269" key="15">
    <source>
    </source>
</evidence>
<evidence type="ECO:0000269" key="16">
    <source>
    </source>
</evidence>
<evidence type="ECO:0000269" key="17">
    <source>
    </source>
</evidence>
<evidence type="ECO:0000269" key="18">
    <source>
    </source>
</evidence>
<evidence type="ECO:0000269" key="19">
    <source>
    </source>
</evidence>
<evidence type="ECO:0000269" key="20">
    <source>
    </source>
</evidence>
<evidence type="ECO:0000269" key="21">
    <source>
    </source>
</evidence>
<evidence type="ECO:0000269" key="22">
    <source>
    </source>
</evidence>
<evidence type="ECO:0000303" key="23">
    <source>
    </source>
</evidence>
<evidence type="ECO:0000305" key="24"/>
<evidence type="ECO:0000305" key="25">
    <source>
    </source>
</evidence>
<evidence type="ECO:0000305" key="26">
    <source>
    </source>
</evidence>
<evidence type="ECO:0000312" key="27">
    <source>
        <dbReference type="EMBL" id="AAA62053.1"/>
    </source>
</evidence>
<evidence type="ECO:0000312" key="28">
    <source>
        <dbReference type="EMBL" id="AAB59149.1"/>
    </source>
</evidence>
<evidence type="ECO:0000312" key="29">
    <source>
        <dbReference type="EMBL" id="AAC76725.1"/>
    </source>
</evidence>
<evidence type="ECO:0000312" key="30">
    <source>
        <dbReference type="EMBL" id="BAE77592.1"/>
    </source>
</evidence>
<evidence type="ECO:0000312" key="31">
    <source>
        <dbReference type="EMBL" id="CAA25980.1"/>
    </source>
</evidence>
<evidence type="ECO:0007744" key="32">
    <source>
        <dbReference type="PDB" id="1J1V"/>
    </source>
</evidence>
<evidence type="ECO:0007744" key="33">
    <source>
        <dbReference type="PDB" id="2E0G"/>
    </source>
</evidence>
<evidence type="ECO:0007829" key="34">
    <source>
        <dbReference type="PDB" id="1J1V"/>
    </source>
</evidence>
<evidence type="ECO:0007829" key="35">
    <source>
        <dbReference type="PDB" id="2E0G"/>
    </source>
</evidence>
<comment type="function">
    <text evidence="1 8 13 14 17 18 21">Plays an essential in the initiation and regulation of chromosomal replication. Binds in an ATP-dependent fashion to the origin of replication (oriC) to initiate formation of the DNA replication initiation complex once per cell cycle (PubMed:3036372). Binds the DnaA box (consensus sequence 5'-TTATC[CA]A[CA]A-3') and separates the double-stranded (ds)DNA (PubMed:3036372, PubMed:18216012). Forms a right-handed helical filament on oriC DNA; dsDNA binds to the exterior of the filament while single-stranded (ss)DNA is stabiized in the filament's interior (By similarity). The ATP-DnaA-oriC complex binds and stabilizes the upper strand of the AT-rich DNA unwinding element (DUE) (PubMed:18216012). Mutagenesis of residues that line the central pore blocks dsDNA strand separation (PubMed:18216012). Subsequent binding of DNA polymerase III subunits leads to replisome formation (PubMed:3036372, PubMed:18216012). The DnaA-ATP form converts to DnaA-ADP; once converted to ADP the protein cannot initiate replication, ensuring only 1 round of replication per cell cycle (PubMed:3036372). Binds ATP, ADP and dATP equally well, hydrolyzes ATP with a half-life of about 15 minutes, ATP hydrolysis is not required for pre-priming replisome formation, nucleotide exchange is very slow (PubMed:3036372). Binds acidic phospholipids (PubMed:9478970, PubMed:26272946). DnaA inhibits its own gene expression (PubMed:2981626) as well as that of other genes including dam, rpoH (PubMed:2540187), ftsA and mioC.</text>
</comment>
<comment type="function">
    <text evidence="5 20">Also required for replication of some plasmid DNA; binds 4 DnaA boxes in the minimal plasmid RK2 replication origin (oriV).</text>
</comment>
<comment type="catalytic activity">
    <reaction evidence="5 18">
        <text>ATP + H2O = ADP + phosphate + H(+)</text>
        <dbReference type="Rhea" id="RHEA:13065"/>
        <dbReference type="ChEBI" id="CHEBI:15377"/>
        <dbReference type="ChEBI" id="CHEBI:15378"/>
        <dbReference type="ChEBI" id="CHEBI:30616"/>
        <dbReference type="ChEBI" id="CHEBI:43474"/>
        <dbReference type="ChEBI" id="CHEBI:456216"/>
    </reaction>
</comment>
<comment type="activity regulation">
    <text evidence="9 10 12 15 22 25 26">Inactivated in part by the RIDA complex (regulatory inactivation of DnaA), composed of ATP-DnaA, Hda and the DNA-loaded beta sliding clamp (dnaN), which rapidly hydrolyzes ATP-DnaA to ADP-DnaA in a DNA-dependent fashion, preventing reinitiation of DNA replication (PubMed:9674428, PubMed:18977760). DnaA inactivation by RIDA is further stimulated by DNA synthesis (PubMed:9674428). Also inactivated by IHF in combination with the datA locus, which promotes ATP hydrolysis of ATP-DnaA, called DDAH (datA-dependent DnaA-ATP hydrolysis) (PubMed:23277577). Reactivation/rejuvenation of ATP-DnaA occurs by binding to specific chromosomal loci called DARS (DnaA reactivating sequences), which promote ADP release from ADP-DnaA (PubMed:19401329). DARS1 and DARS2 act independently to elevate the ATP-DnaA level in vivo; their deletion inhibits replication initiation (PubMed:19401329). Rejuvenation of ATP-DnaA may also occur in part on the cell inner membrane (PubMed:9478970, PubMed:26272946). Acetylation decreases the binding abilities to ATP and ADP and leads to inhibition of DNA replication initiation (PubMed:27484197).</text>
</comment>
<comment type="subunit">
    <text evidence="2 7 9 22">Oligomerizes as a right-handed, spiral filament on DNA at oriC (By similarity). About 20 DnaA protein molecules bind to oriC. Forms the RIDA (regulatory inactivation of DnaA) complex with ATP-DnaA, ADP-Hda and the DNA-loaded sliding beta clamp (dnaN) (PubMed:9674428, PubMed:18977760). Interacts with DiaA; this stimulates the association of DnaA with the origin of replication (PubMed:17699754).</text>
</comment>
<comment type="interaction">
    <interactant intactId="EBI-548951">
        <id>P03004</id>
    </interactant>
    <interactant intactId="EBI-1125806">
        <id>P66817</id>
        <label>diaA</label>
    </interactant>
    <organismsDiffer>false</organismsDiffer>
    <experiments>5</experiments>
</comment>
<comment type="interaction">
    <interactant intactId="EBI-548951">
        <id>P03004</id>
    </interactant>
    <interactant intactId="EBI-548951">
        <id>P03004</id>
        <label>dnaA</label>
    </interactant>
    <organismsDiffer>false</organismsDiffer>
    <experiments>2</experiments>
</comment>
<comment type="interaction">
    <interactant intactId="EBI-548951">
        <id>P03004</id>
    </interactant>
    <interactant intactId="EBI-548978">
        <id>P0ACB0</id>
        <label>dnaB</label>
    </interactant>
    <organismsDiffer>false</organismsDiffer>
    <experiments>4</experiments>
</comment>
<comment type="interaction">
    <interactant intactId="EBI-548951">
        <id>P03004</id>
    </interactant>
    <interactant intactId="EBI-549640">
        <id>P0ABT2</id>
        <label>dps</label>
    </interactant>
    <organismsDiffer>false</organismsDiffer>
    <experiments>2</experiments>
</comment>
<comment type="interaction">
    <interactant intactId="EBI-548951">
        <id>P03004</id>
    </interactant>
    <interactant intactId="EBI-545453">
        <id>P69931</id>
        <label>hda</label>
    </interactant>
    <organismsDiffer>false</organismsDiffer>
    <experiments>2</experiments>
</comment>
<comment type="interaction">
    <interactant intactId="EBI-548951">
        <id>P03004</id>
    </interactant>
    <interactant intactId="EBI-547648">
        <id>P0ACF0</id>
        <label>hupA</label>
    </interactant>
    <organismsDiffer>false</organismsDiffer>
    <experiments>5</experiments>
</comment>
<comment type="interaction">
    <interactant intactId="EBI-548951">
        <id>P03004</id>
    </interactant>
    <interactant intactId="EBI-548960">
        <id>P18843</id>
        <label>nadE</label>
    </interactant>
    <organismsDiffer>false</organismsDiffer>
    <experiments>3</experiments>
</comment>
<comment type="interaction">
    <interactant intactId="EBI-548951">
        <id>P03004</id>
    </interactant>
    <interactant intactId="EBI-543515">
        <id>P60422</id>
        <label>rplB</label>
    </interactant>
    <organismsDiffer>false</organismsDiffer>
    <experiments>5</experiments>
</comment>
<comment type="subcellular location">
    <subcellularLocation>
        <location evidence="2 11">Cytoplasm</location>
    </subcellularLocation>
    <subcellularLocation>
        <location evidence="11 16">Cytoplasm</location>
        <location evidence="11 16">Nucleoid</location>
    </subcellularLocation>
    <subcellularLocation>
        <location evidence="11 21">Cell inner membrane</location>
        <topology evidence="11">Peripheral membrane protein</topology>
    </subcellularLocation>
    <text evidence="11 16">About 10% of the protein associates with the cell inner membrane (shown in strain BL21(DE3)) (PubMed:22574163). 70% of the protein oscillates between opposite cell halves in a time frame of a few seconds, independent of transcription (PubMed:28166228).</text>
</comment>
<comment type="induction">
    <text evidence="17">Part of the dnaA-dnaN-recF-gyrB operon. Represses its own transcription; has 2 promoters, both of which are autorepressed (PubMed:2981626). DnaA binds within its own promoter (PubMed:2981626).</text>
</comment>
<comment type="domain">
    <text evidence="2 4 5 11 21">Domain I is involved in oligomerization and binding regulators, domain II is flexibile and of varying length in different bacteria, domain III forms the AAA+ region, while domain IV binds dsDNA (PubMed:15878847). Binds to the inner membrane via domain III (residues 117-378) (PubMed:22574163). Binds dsDNA via domain IV (PubMed:12682358). Inserts into acidic phosopholipid-containing membranes via resides 309-399 which plays a role in rejuventation of ATP-DnaA (PubMed:9478970).</text>
</comment>
<comment type="PTM">
    <text evidence="15">Acetylated at Lys-178 by PatZ (PubMed:27484197). Deacetylated by CobB (PubMed:27484197). Is also acetylated nonenzymatically by acetyl-phosphate (PubMed:27484197). Acetylation levels increase in a growth phase-dependent manner and peak in stationnary phase.</text>
</comment>
<comment type="miscellaneous">
    <text evidence="9 12 17">At least 4 systems specifically target DnaA to prevent more than 1 round of replication initiation per cell cycle. 1: SeqA binds to and sequesters hemimethylated oriC, preventing DnaA binding. 2: ATP-DnaA binds to the chromosomal datA locus, hydrolyzing ATP-DnaA in the presence of IHF (PubMed:23277577). 3: ATP-DnaA binds to its own promoter, repressing transcription (PubMed:2981626). 4: RIDA (regulatory inactivation of DnaA) via Hda and the DNA-loaded beta clamp (dnaN) hydrolyzes ATP-DnaA to ADP-DnaA (PubMed:18977760).</text>
</comment>
<comment type="similarity">
    <text evidence="2">Belongs to the DnaA family.</text>
</comment>
<comment type="sequence caution" evidence="24">
    <conflict type="erroneous initiation">
        <sequence resource="EMBL-CDS" id="AAA62053"/>
    </conflict>
    <text>Extended N-terminus.</text>
</comment>
<sequence length="467" mass="52551">MSLSLWQQCLARLQDELPATEFSMWIRPLQAELSDNTLALYAPNRFVLDWVRDKYLNNINGLLTSFCGADAPQLRFEVGTKPVTQTPQAAVTSNVAAPAQVAQTQPQRAAPSTRSGWDNVPAPAEPTYRSNVNVKHTFDNFVEGKSNQLARAAARQVADNPGGAYNPLFLYGGTGLGKTHLLHAVGNGIMARKPNAKVVYMHSERFVQDMVKALQNNAIEEFKRYYRSVDALLIDDIQFFANKERSQEEFFHTFNALLEGNQQIILTSDRYPKEINGVEDRLKSRFGWGLTVAIEPPELETRVAILMKKADENDIRLPGEVAFFIAKRLRSNVRELEGALNRVIANANFTGRAITIDFVREALRDLLALQEKLVTIDNIQKTVAEYYKIKVADLLSKRRSRSVARPRQMAMALAKELTNHSLPEIGDAFGGRDHTTVLHACRKIEQLREESHDIKEDFSNLIRTLSS</sequence>
<gene>
    <name evidence="2" type="primary">dnaA</name>
    <name type="ordered locus">b3702</name>
    <name type="ordered locus">JW3679</name>
</gene>
<proteinExistence type="evidence at protein level"/>
<name>DNAA_ECOLI</name>
<accession>P03004</accession>
<accession>P78122</accession>
<accession>Q2M814</accession>
<organism>
    <name type="scientific">Escherichia coli (strain K12)</name>
    <dbReference type="NCBI Taxonomy" id="83333"/>
    <lineage>
        <taxon>Bacteria</taxon>
        <taxon>Pseudomonadati</taxon>
        <taxon>Pseudomonadota</taxon>
        <taxon>Gammaproteobacteria</taxon>
        <taxon>Enterobacterales</taxon>
        <taxon>Enterobacteriaceae</taxon>
        <taxon>Escherichia</taxon>
    </lineage>
</organism>
<dbReference type="EC" id="3.6.4.-" evidence="5 18"/>
<dbReference type="EMBL" id="J01602">
    <property type="protein sequence ID" value="AAB59149.1"/>
    <property type="molecule type" value="Genomic_DNA"/>
</dbReference>
<dbReference type="EMBL" id="X01861">
    <property type="protein sequence ID" value="CAA25980.1"/>
    <property type="molecule type" value="Genomic_DNA"/>
</dbReference>
<dbReference type="EMBL" id="L10328">
    <property type="protein sequence ID" value="AAA62053.1"/>
    <property type="status" value="ALT_INIT"/>
    <property type="molecule type" value="Genomic_DNA"/>
</dbReference>
<dbReference type="EMBL" id="U00096">
    <property type="protein sequence ID" value="AAC76725.1"/>
    <property type="molecule type" value="Genomic_DNA"/>
</dbReference>
<dbReference type="EMBL" id="AP009048">
    <property type="protein sequence ID" value="BAE77592.1"/>
    <property type="molecule type" value="Genomic_DNA"/>
</dbReference>
<dbReference type="PIR" id="G65172">
    <property type="entry name" value="IQECDA"/>
</dbReference>
<dbReference type="RefSeq" id="NP_418157.1">
    <property type="nucleotide sequence ID" value="NC_000913.3"/>
</dbReference>
<dbReference type="RefSeq" id="WP_000059111.1">
    <property type="nucleotide sequence ID" value="NZ_STEB01000015.1"/>
</dbReference>
<dbReference type="PDB" id="1J1V">
    <property type="method" value="X-ray"/>
    <property type="resolution" value="2.10 A"/>
    <property type="chains" value="A=374-467"/>
</dbReference>
<dbReference type="PDB" id="2E0G">
    <property type="method" value="NMR"/>
    <property type="chains" value="A=2-108"/>
</dbReference>
<dbReference type="PDBsum" id="1J1V"/>
<dbReference type="PDBsum" id="2E0G"/>
<dbReference type="SMR" id="P03004"/>
<dbReference type="BioGRID" id="4261539">
    <property type="interactions" value="259"/>
</dbReference>
<dbReference type="BioGRID" id="852519">
    <property type="interactions" value="2"/>
</dbReference>
<dbReference type="ComplexPortal" id="CPX-1943">
    <property type="entry name" value="dnaA oligomeric complex"/>
</dbReference>
<dbReference type="ComplexPortal" id="CPX-1944">
    <property type="entry name" value="DnaA-L2 DNA replication initiation inhibitory complex"/>
</dbReference>
<dbReference type="ComplexPortal" id="CPX-1945">
    <property type="entry name" value="Regulatory inactivation of dnaA (RIDA) complex"/>
</dbReference>
<dbReference type="ComplexPortal" id="CPX-1948">
    <property type="entry name" value="dnaA-dps DNA replication initiation inhibitory complex"/>
</dbReference>
<dbReference type="ComplexPortal" id="CPX-1950">
    <property type="entry name" value="dnaA-dnaB-dnaC loader complex"/>
</dbReference>
<dbReference type="ComplexPortal" id="CPX-1961">
    <property type="entry name" value="DnaA-HU complex, variant hupAB"/>
</dbReference>
<dbReference type="ComplexPortal" id="CPX-1962">
    <property type="entry name" value="DnaA-HU complex, variant hupA"/>
</dbReference>
<dbReference type="ComplexPortal" id="CPX-1963">
    <property type="entry name" value="dnaA-diaA complex"/>
</dbReference>
<dbReference type="DIP" id="DIP-9455N"/>
<dbReference type="FunCoup" id="P03004">
    <property type="interactions" value="491"/>
</dbReference>
<dbReference type="IntAct" id="P03004">
    <property type="interactions" value="45"/>
</dbReference>
<dbReference type="STRING" id="511145.b3702"/>
<dbReference type="iPTMnet" id="P03004"/>
<dbReference type="jPOST" id="P03004"/>
<dbReference type="PaxDb" id="511145-b3702"/>
<dbReference type="DNASU" id="948217"/>
<dbReference type="EnsemblBacteria" id="AAC76725">
    <property type="protein sequence ID" value="AAC76725"/>
    <property type="gene ID" value="b3702"/>
</dbReference>
<dbReference type="GeneID" id="93778443"/>
<dbReference type="GeneID" id="948217"/>
<dbReference type="KEGG" id="ecj:JW3679"/>
<dbReference type="KEGG" id="eco:b3702"/>
<dbReference type="PATRIC" id="fig|511145.12.peg.3826"/>
<dbReference type="EchoBASE" id="EB0231"/>
<dbReference type="eggNOG" id="COG0593">
    <property type="taxonomic scope" value="Bacteria"/>
</dbReference>
<dbReference type="HOGENOM" id="CLU_026910_0_1_6"/>
<dbReference type="InParanoid" id="P03004"/>
<dbReference type="OMA" id="DFIHFYQ"/>
<dbReference type="OrthoDB" id="9807019at2"/>
<dbReference type="PhylomeDB" id="P03004"/>
<dbReference type="BioCyc" id="EcoCyc:PD03831"/>
<dbReference type="EvolutionaryTrace" id="P03004"/>
<dbReference type="PRO" id="PR:P03004"/>
<dbReference type="Proteomes" id="UP000000625">
    <property type="component" value="Chromosome"/>
</dbReference>
<dbReference type="GO" id="GO:0009898">
    <property type="term" value="C:cytoplasmic side of plasma membrane"/>
    <property type="evidence" value="ECO:0000314"/>
    <property type="project" value="EcoCyc"/>
</dbReference>
<dbReference type="GO" id="GO:0005829">
    <property type="term" value="C:cytosol"/>
    <property type="evidence" value="ECO:0000314"/>
    <property type="project" value="EcoCyc"/>
</dbReference>
<dbReference type="GO" id="GO:1990102">
    <property type="term" value="C:DnaA-DiaA complex"/>
    <property type="evidence" value="ECO:0000353"/>
    <property type="project" value="ComplexPortal"/>
</dbReference>
<dbReference type="GO" id="GO:1990084">
    <property type="term" value="C:DnaA-Dps complex"/>
    <property type="evidence" value="ECO:0000353"/>
    <property type="project" value="ComplexPortal"/>
</dbReference>
<dbReference type="GO" id="GO:1990103">
    <property type="term" value="C:DnaA-HU complex"/>
    <property type="evidence" value="ECO:0000353"/>
    <property type="project" value="ComplexPortal"/>
</dbReference>
<dbReference type="GO" id="GO:1990082">
    <property type="term" value="C:DnaA-L2 complex"/>
    <property type="evidence" value="ECO:0000353"/>
    <property type="project" value="ComplexPortal"/>
</dbReference>
<dbReference type="GO" id="GO:1990101">
    <property type="term" value="C:DnaA-oriC complex"/>
    <property type="evidence" value="ECO:0000353"/>
    <property type="project" value="ComplexPortal"/>
</dbReference>
<dbReference type="GO" id="GO:0009295">
    <property type="term" value="C:nucleoid"/>
    <property type="evidence" value="ECO:0007669"/>
    <property type="project" value="UniProtKB-SubCell"/>
</dbReference>
<dbReference type="GO" id="GO:0005886">
    <property type="term" value="C:plasma membrane"/>
    <property type="evidence" value="ECO:0000318"/>
    <property type="project" value="GO_Central"/>
</dbReference>
<dbReference type="GO" id="GO:1990078">
    <property type="term" value="C:replication inhibiting complex"/>
    <property type="evidence" value="ECO:0000353"/>
    <property type="project" value="ComplexPortal"/>
</dbReference>
<dbReference type="GO" id="GO:0005524">
    <property type="term" value="F:ATP binding"/>
    <property type="evidence" value="ECO:0007669"/>
    <property type="project" value="UniProtKB-UniRule"/>
</dbReference>
<dbReference type="GO" id="GO:0016887">
    <property type="term" value="F:ATP hydrolysis activity"/>
    <property type="evidence" value="ECO:0007669"/>
    <property type="project" value="InterPro"/>
</dbReference>
<dbReference type="GO" id="GO:0003677">
    <property type="term" value="F:DNA binding"/>
    <property type="evidence" value="ECO:0000314"/>
    <property type="project" value="EcoCyc"/>
</dbReference>
<dbReference type="GO" id="GO:0003688">
    <property type="term" value="F:DNA replication origin binding"/>
    <property type="evidence" value="ECO:0000315"/>
    <property type="project" value="EcoCyc"/>
</dbReference>
<dbReference type="GO" id="GO:0042802">
    <property type="term" value="F:identical protein binding"/>
    <property type="evidence" value="ECO:0000353"/>
    <property type="project" value="IntAct"/>
</dbReference>
<dbReference type="GO" id="GO:0008289">
    <property type="term" value="F:lipid binding"/>
    <property type="evidence" value="ECO:0007669"/>
    <property type="project" value="UniProtKB-KW"/>
</dbReference>
<dbReference type="GO" id="GO:0043565">
    <property type="term" value="F:sequence-specific DNA binding"/>
    <property type="evidence" value="ECO:0000314"/>
    <property type="project" value="EcoliWiki"/>
</dbReference>
<dbReference type="GO" id="GO:0006260">
    <property type="term" value="P:DNA replication"/>
    <property type="evidence" value="ECO:0000315"/>
    <property type="project" value="EcoliWiki"/>
</dbReference>
<dbReference type="GO" id="GO:0006270">
    <property type="term" value="P:DNA replication initiation"/>
    <property type="evidence" value="ECO:0000314"/>
    <property type="project" value="ComplexPortal"/>
</dbReference>
<dbReference type="GO" id="GO:0032297">
    <property type="term" value="P:negative regulation of DNA-templated DNA replication initiation"/>
    <property type="evidence" value="ECO:0000314"/>
    <property type="project" value="ComplexPortal"/>
</dbReference>
<dbReference type="GO" id="GO:0032298">
    <property type="term" value="P:positive regulation of DNA-templated DNA replication initiation"/>
    <property type="evidence" value="ECO:0000314"/>
    <property type="project" value="ComplexPortal"/>
</dbReference>
<dbReference type="GO" id="GO:0006275">
    <property type="term" value="P:regulation of DNA replication"/>
    <property type="evidence" value="ECO:0000315"/>
    <property type="project" value="EcoliWiki"/>
</dbReference>
<dbReference type="GO" id="GO:0030174">
    <property type="term" value="P:regulation of DNA-templated DNA replication initiation"/>
    <property type="evidence" value="ECO:0000303"/>
    <property type="project" value="ComplexPortal"/>
</dbReference>
<dbReference type="CDD" id="cd00009">
    <property type="entry name" value="AAA"/>
    <property type="match status" value="1"/>
</dbReference>
<dbReference type="CDD" id="cd06571">
    <property type="entry name" value="Bac_DnaA_C"/>
    <property type="match status" value="1"/>
</dbReference>
<dbReference type="FunFam" id="1.10.1750.10:FF:000001">
    <property type="entry name" value="Chromosomal replication initiator protein DnaA"/>
    <property type="match status" value="1"/>
</dbReference>
<dbReference type="FunFam" id="1.10.8.60:FF:000003">
    <property type="entry name" value="Chromosomal replication initiator protein DnaA"/>
    <property type="match status" value="1"/>
</dbReference>
<dbReference type="FunFam" id="3.30.300.180:FF:000001">
    <property type="entry name" value="Chromosomal replication initiator protein DnaA"/>
    <property type="match status" value="1"/>
</dbReference>
<dbReference type="FunFam" id="3.40.50.300:FF:000103">
    <property type="entry name" value="Chromosomal replication initiator protein DnaA"/>
    <property type="match status" value="1"/>
</dbReference>
<dbReference type="Gene3D" id="1.10.1750.10">
    <property type="match status" value="1"/>
</dbReference>
<dbReference type="Gene3D" id="1.10.8.60">
    <property type="match status" value="1"/>
</dbReference>
<dbReference type="Gene3D" id="3.30.300.180">
    <property type="match status" value="1"/>
</dbReference>
<dbReference type="Gene3D" id="3.40.50.300">
    <property type="entry name" value="P-loop containing nucleotide triphosphate hydrolases"/>
    <property type="match status" value="1"/>
</dbReference>
<dbReference type="HAMAP" id="MF_00377">
    <property type="entry name" value="DnaA_bact"/>
    <property type="match status" value="1"/>
</dbReference>
<dbReference type="InterPro" id="IPR003593">
    <property type="entry name" value="AAA+_ATPase"/>
</dbReference>
<dbReference type="InterPro" id="IPR001957">
    <property type="entry name" value="Chromosome_initiator_DnaA"/>
</dbReference>
<dbReference type="InterPro" id="IPR020591">
    <property type="entry name" value="Chromosome_initiator_DnaA-like"/>
</dbReference>
<dbReference type="InterPro" id="IPR018312">
    <property type="entry name" value="Chromosome_initiator_DnaA_CS"/>
</dbReference>
<dbReference type="InterPro" id="IPR013159">
    <property type="entry name" value="DnaA_C"/>
</dbReference>
<dbReference type="InterPro" id="IPR013317">
    <property type="entry name" value="DnaA_dom"/>
</dbReference>
<dbReference type="InterPro" id="IPR024633">
    <property type="entry name" value="DnaA_N_dom"/>
</dbReference>
<dbReference type="InterPro" id="IPR038454">
    <property type="entry name" value="DnaA_N_sf"/>
</dbReference>
<dbReference type="InterPro" id="IPR027417">
    <property type="entry name" value="P-loop_NTPase"/>
</dbReference>
<dbReference type="InterPro" id="IPR010921">
    <property type="entry name" value="Trp_repressor/repl_initiator"/>
</dbReference>
<dbReference type="NCBIfam" id="TIGR00362">
    <property type="entry name" value="DnaA"/>
    <property type="match status" value="1"/>
</dbReference>
<dbReference type="PANTHER" id="PTHR30050">
    <property type="entry name" value="CHROMOSOMAL REPLICATION INITIATOR PROTEIN DNAA"/>
    <property type="match status" value="1"/>
</dbReference>
<dbReference type="PANTHER" id="PTHR30050:SF2">
    <property type="entry name" value="CHROMOSOMAL REPLICATION INITIATOR PROTEIN DNAA"/>
    <property type="match status" value="1"/>
</dbReference>
<dbReference type="Pfam" id="PF00308">
    <property type="entry name" value="Bac_DnaA"/>
    <property type="match status" value="1"/>
</dbReference>
<dbReference type="Pfam" id="PF08299">
    <property type="entry name" value="Bac_DnaA_C"/>
    <property type="match status" value="1"/>
</dbReference>
<dbReference type="Pfam" id="PF11638">
    <property type="entry name" value="DnaA_N"/>
    <property type="match status" value="1"/>
</dbReference>
<dbReference type="PRINTS" id="PR00051">
    <property type="entry name" value="DNAA"/>
</dbReference>
<dbReference type="SMART" id="SM00382">
    <property type="entry name" value="AAA"/>
    <property type="match status" value="1"/>
</dbReference>
<dbReference type="SMART" id="SM00760">
    <property type="entry name" value="Bac_DnaA_C"/>
    <property type="match status" value="1"/>
</dbReference>
<dbReference type="SUPFAM" id="SSF52540">
    <property type="entry name" value="P-loop containing nucleoside triphosphate hydrolases"/>
    <property type="match status" value="1"/>
</dbReference>
<dbReference type="SUPFAM" id="SSF48295">
    <property type="entry name" value="TrpR-like"/>
    <property type="match status" value="1"/>
</dbReference>
<dbReference type="PROSITE" id="PS01008">
    <property type="entry name" value="DNAA"/>
    <property type="match status" value="1"/>
</dbReference>
<protein>
    <recommendedName>
        <fullName evidence="2">Chromosomal replication initiator protein DnaA</fullName>
        <ecNumber evidence="5 18">3.6.4.-</ecNumber>
    </recommendedName>
</protein>
<keyword id="KW-0002">3D-structure</keyword>
<keyword id="KW-0007">Acetylation</keyword>
<keyword id="KW-0067">ATP-binding</keyword>
<keyword id="KW-0997">Cell inner membrane</keyword>
<keyword id="KW-1003">Cell membrane</keyword>
<keyword id="KW-0963">Cytoplasm</keyword>
<keyword id="KW-0235">DNA replication</keyword>
<keyword id="KW-0238">DNA-binding</keyword>
<keyword id="KW-0378">Hydrolase</keyword>
<keyword id="KW-0446">Lipid-binding</keyword>
<keyword id="KW-0472">Membrane</keyword>
<keyword id="KW-0547">Nucleotide-binding</keyword>
<keyword id="KW-1185">Reference proteome</keyword>
<keyword id="KW-0678">Repressor</keyword>
<keyword id="KW-0804">Transcription</keyword>
<keyword id="KW-0805">Transcription regulation</keyword>
<feature type="chain" id="PRO_0000114174" description="Chromosomal replication initiator protein DnaA">
    <location>
        <begin position="1"/>
        <end position="467"/>
    </location>
</feature>
<feature type="region of interest" description="Domain I, interacts with DnaA modulators" evidence="2 23">
    <location>
        <begin position="1"/>
        <end position="90"/>
    </location>
</feature>
<feature type="region of interest" description="Domain II, transiently binds replication helicase" evidence="23">
    <location>
        <begin position="91"/>
        <end position="130"/>
    </location>
</feature>
<feature type="region of interest" description="Disordered" evidence="3">
    <location>
        <begin position="98"/>
        <end position="119"/>
    </location>
</feature>
<feature type="region of interest" description="Domain III, AAA+ region" evidence="2 23">
    <location>
        <begin position="131"/>
        <end position="347"/>
    </location>
</feature>
<feature type="region of interest" description="Inserts into membranes" evidence="21">
    <location>
        <begin position="309"/>
        <end position="399"/>
    </location>
</feature>
<feature type="region of interest" description="Domain IV, binds dsDNA" evidence="2 4 23">
    <location>
        <begin position="348"/>
        <end position="467"/>
    </location>
</feature>
<feature type="compositionally biased region" description="Low complexity" evidence="3">
    <location>
        <begin position="98"/>
        <end position="111"/>
    </location>
</feature>
<feature type="binding site" evidence="2">
    <location>
        <position position="175"/>
    </location>
    <ligand>
        <name>ATP</name>
        <dbReference type="ChEBI" id="CHEBI:30616"/>
    </ligand>
</feature>
<feature type="binding site" evidence="2">
    <location>
        <position position="177"/>
    </location>
    <ligand>
        <name>ATP</name>
        <dbReference type="ChEBI" id="CHEBI:30616"/>
    </ligand>
</feature>
<feature type="binding site" evidence="2">
    <location>
        <position position="178"/>
    </location>
    <ligand>
        <name>ATP</name>
        <dbReference type="ChEBI" id="CHEBI:30616"/>
    </ligand>
</feature>
<feature type="binding site" evidence="2">
    <location>
        <position position="179"/>
    </location>
    <ligand>
        <name>ATP</name>
        <dbReference type="ChEBI" id="CHEBI:30616"/>
    </ligand>
</feature>
<feature type="modified residue" description="N6-acetyllysine; by PatZ" evidence="15">
    <location>
        <position position="178"/>
    </location>
</feature>
<feature type="mutagenesis site" description="Unable to initiate replication from oriC or oriV, no self-oligomerization, binds DNA normally, no change in ATPase or ATP affinity, cannot load DnaB helicase." evidence="5">
    <original>W</original>
    <variation>A</variation>
    <location>
        <position position="6"/>
    </location>
</feature>
<feature type="mutagenesis site" description="Inactive for DNA replication in vivo, wild-type affinity for ADP and ATP, does not load DnaB helicase." evidence="6">
    <original>E</original>
    <variation>A</variation>
    <location>
        <position position="21"/>
    </location>
</feature>
<feature type="mutagenesis site" description="In dnaA167; temperature sensitive." evidence="19">
    <original>V</original>
    <variation>Q</variation>
    <location>
        <position position="157"/>
    </location>
</feature>
<feature type="mutagenesis site" description="Loses the ability to bind to ATP or ADP." evidence="15">
    <original>K</original>
    <variation>Q</variation>
    <variation>R</variation>
    <location>
        <position position="178"/>
    </location>
</feature>
<feature type="mutagenesis site" description="In dnaA46; temperature sensitive." evidence="19">
    <original>A</original>
    <variation>V</variation>
    <location>
        <position position="184"/>
    </location>
</feature>
<feature type="mutagenesis site" description="Does not initiate replication at oriC at 42 degrees Celsius, does not unwind oriC, forms active ATP-DnaA-oriC complex, does not bind ssDNA, can load DnaB helicase, ATP- and DNA-binding are wild type." evidence="8">
    <original>V</original>
    <variation>A</variation>
    <location>
        <position position="211"/>
    </location>
</feature>
<feature type="mutagenesis site" description="Does not initiate replication at oriC at 42 degrees Celsius, does not unwind oriC, does not form active ATP-DnaA-oriC complex, can load DnaB helicase, ATP- and DNA-binding are wild type." evidence="8">
    <original>K</original>
    <variation>A</variation>
    <location>
        <position position="223"/>
    </location>
</feature>
<feature type="mutagenesis site" description="Does not initiate replication at oriC at 30 degrees Celsius, does not unwind oriC, does not form active ATP-DnaA-oriC complex, poor loading of DnaB helicase, ATP- and DNA-binding are wild type." evidence="8">
    <original>K</original>
    <variation>A</variation>
    <location>
        <position position="243"/>
    </location>
</feature>
<feature type="mutagenesis site" description="Does not initiate replication at oriC at 30 degrees Celsius, does not unwind oriC, forms active ATP-DnaA-oriC complex, does not bind ssDNA, can load DnaB helicase, ATP- and DNA-binding are wild type." evidence="8">
    <original>R</original>
    <variation>A</variation>
    <location>
        <position position="245"/>
    </location>
</feature>
<feature type="mutagenesis site" description="DARS1 no longer stimulates ADP release from ADP-DnaA, binds DNA but forms fewer complexes with DARS1 DNA." evidence="10">
    <original>D</original>
    <variation>N</variation>
    <location>
        <position position="269"/>
    </location>
</feature>
<feature type="mutagenesis site" description="ATP-DnaA poorly hydrolyzed by datA-IHF." evidence="12">
    <original>R</original>
    <variation>A</variation>
    <location>
        <position position="281"/>
    </location>
</feature>
<feature type="mutagenesis site" description="Moderate decrease in DARS1-mediated ADP release from ADP-DnaA, binds DARS1 DNA normally. ATP-DnaA poorly hydrolyzed by datA-IHF." evidence="10 12">
    <original>R</original>
    <variation>A</variation>
    <location>
        <position position="285"/>
    </location>
</feature>
<feature type="mutagenesis site" description="ATP-DnaA is no longer hydrolyzed by datA-IHF." evidence="12">
    <original>R</original>
    <variation>A</variation>
    <location>
        <position position="334"/>
    </location>
</feature>
<feature type="mutagenesis site" description="DARS1 no longer stimulates ADP release from ADP-DnaA, does not bind DNA. ATP-DnaA is no longer hydrolyzed by datA-IHF." evidence="10 12">
    <original>R</original>
    <variation>A</variation>
    <location>
        <position position="399"/>
    </location>
</feature>
<feature type="mutagenesis site" description="Decreased DNA-binding; protein does not localize to the nucleoid, forms inclusion bodies at cell pole(s)." evidence="11">
    <original>L</original>
    <variation>P</variation>
    <location>
        <position position="417"/>
    </location>
</feature>
<feature type="mutagenesis site" description="DARS1 no longer stimulates ADP release from ADP-DnaA, does not bind DNA." evidence="10">
    <original>T</original>
    <variation>M</variation>
    <location>
        <position position="435"/>
    </location>
</feature>
<feature type="sequence conflict" description="In Ref. 3; AAA62053." evidence="24" ref="3">
    <original>VARPR</original>
    <variation>GXGPG</variation>
    <location>
        <begin position="403"/>
        <end position="407"/>
    </location>
</feature>
<feature type="helix" evidence="35">
    <location>
        <begin position="5"/>
        <end position="16"/>
    </location>
</feature>
<feature type="helix" evidence="35">
    <location>
        <begin position="21"/>
        <end position="24"/>
    </location>
</feature>
<feature type="turn" evidence="35">
    <location>
        <begin position="25"/>
        <end position="28"/>
    </location>
</feature>
<feature type="strand" evidence="35">
    <location>
        <begin position="29"/>
        <end position="33"/>
    </location>
</feature>
<feature type="strand" evidence="35">
    <location>
        <begin position="35"/>
        <end position="44"/>
    </location>
</feature>
<feature type="helix" evidence="35">
    <location>
        <begin position="45"/>
        <end position="53"/>
    </location>
</feature>
<feature type="helix" evidence="35">
    <location>
        <begin position="55"/>
        <end position="66"/>
    </location>
</feature>
<feature type="strand" evidence="35">
    <location>
        <begin position="68"/>
        <end position="70"/>
    </location>
</feature>
<feature type="strand" evidence="35">
    <location>
        <begin position="77"/>
        <end position="80"/>
    </location>
</feature>
<feature type="helix" evidence="34">
    <location>
        <begin position="376"/>
        <end position="386"/>
    </location>
</feature>
<feature type="helix" evidence="34">
    <location>
        <begin position="391"/>
        <end position="395"/>
    </location>
</feature>
<feature type="helix" evidence="34">
    <location>
        <begin position="401"/>
        <end position="417"/>
    </location>
</feature>
<feature type="helix" evidence="34">
    <location>
        <begin position="422"/>
        <end position="428"/>
    </location>
</feature>
<feature type="helix" evidence="34">
    <location>
        <begin position="434"/>
        <end position="450"/>
    </location>
</feature>
<feature type="helix" evidence="34">
    <location>
        <begin position="452"/>
        <end position="465"/>
    </location>
</feature>
<reference evidence="28" key="1">
    <citation type="journal article" date="1982" name="Nucleic Acids Res.">
        <title>The nucleotide sequence of the dnaA gene and the first part of the dnaN gene of Escherichia coli K-12.</title>
        <authorList>
            <person name="Hansen E.B."/>
            <person name="Hansen F.G."/>
            <person name="von Meyenburg K."/>
        </authorList>
    </citation>
    <scope>NUCLEOTIDE SEQUENCE [GENOMIC DNA]</scope>
    <source>
        <strain>K12</strain>
    </source>
</reference>
<reference evidence="28" key="2">
    <citation type="journal article" date="1984" name="Gene">
        <title>Structural analysis of the dnaA and dnaN genes of Escherichia coli.</title>
        <authorList>
            <person name="Ohmori H."/>
            <person name="Kimura M."/>
            <person name="Nagata T."/>
            <person name="Sakakibara Y."/>
        </authorList>
    </citation>
    <scope>NUCLEOTIDE SEQUENCE [GENOMIC DNA]</scope>
    <scope>MUTAGENESIS OF VAL-157 AND ALA-184</scope>
    <source>
        <strain>K12</strain>
    </source>
</reference>
<reference evidence="27" key="3">
    <citation type="journal article" date="1993" name="Genomics">
        <title>DNA sequence and analysis of 136 kilobases of the Escherichia coli genome: organizational symmetry around the origin of replication.</title>
        <authorList>
            <person name="Burland V.D."/>
            <person name="Plunkett G. III"/>
            <person name="Daniels D.L."/>
            <person name="Blattner F.R."/>
        </authorList>
    </citation>
    <scope>NUCLEOTIDE SEQUENCE [LARGE SCALE GENOMIC DNA]</scope>
    <source>
        <strain>K12 / MG1655 / ATCC 47076</strain>
    </source>
</reference>
<reference evidence="29" key="4">
    <citation type="journal article" date="1997" name="Science">
        <title>The complete genome sequence of Escherichia coli K-12.</title>
        <authorList>
            <person name="Blattner F.R."/>
            <person name="Plunkett G. III"/>
            <person name="Bloch C.A."/>
            <person name="Perna N.T."/>
            <person name="Burland V."/>
            <person name="Riley M."/>
            <person name="Collado-Vides J."/>
            <person name="Glasner J.D."/>
            <person name="Rode C.K."/>
            <person name="Mayhew G.F."/>
            <person name="Gregor J."/>
            <person name="Davis N.W."/>
            <person name="Kirkpatrick H.A."/>
            <person name="Goeden M.A."/>
            <person name="Rose D.J."/>
            <person name="Mau B."/>
            <person name="Shao Y."/>
        </authorList>
    </citation>
    <scope>NUCLEOTIDE SEQUENCE [LARGE SCALE GENOMIC DNA]</scope>
    <scope>SEQUENCE REVISION TO 403-407</scope>
    <source>
        <strain>K12 / MG1655 / ATCC 47076</strain>
    </source>
</reference>
<reference evidence="30" key="5">
    <citation type="journal article" date="2006" name="Mol. Syst. Biol.">
        <title>Highly accurate genome sequences of Escherichia coli K-12 strains MG1655 and W3110.</title>
        <authorList>
            <person name="Hayashi K."/>
            <person name="Morooka N."/>
            <person name="Yamamoto Y."/>
            <person name="Fujita K."/>
            <person name="Isono K."/>
            <person name="Choi S."/>
            <person name="Ohtsubo E."/>
            <person name="Baba T."/>
            <person name="Wanner B.L."/>
            <person name="Mori H."/>
            <person name="Horiuchi T."/>
        </authorList>
    </citation>
    <scope>NUCLEOTIDE SEQUENCE [LARGE SCALE GENOMIC DNA]</scope>
    <source>
        <strain>K12 / W3110 / ATCC 27325 / DSM 5911</strain>
    </source>
</reference>
<reference evidence="31" key="6">
    <citation type="journal article" date="1982" name="EMBO J.">
        <title>The nucleotide sequence of the dnaA gene promoter and of the adjacent rpmH gene, coding for the ribosomal protein L34, of Escherichia coli.</title>
        <authorList>
            <person name="Hansen F.G."/>
            <person name="Hansen E.B."/>
            <person name="Atlung T."/>
        </authorList>
    </citation>
    <scope>NUCLEOTIDE SEQUENCE [GENOMIC DNA] OF 1-22</scope>
</reference>
<reference key="7">
    <citation type="journal article" date="1985" name="Cell">
        <title>Autoregulation of the DNA replication gene dnaA in E. coli K-12.</title>
        <authorList>
            <person name="Braun R.E."/>
            <person name="O'Day K."/>
            <person name="Wright A."/>
        </authorList>
    </citation>
    <scope>AUTOREPRESSION</scope>
    <scope>INDUCTION</scope>
    <scope>DNA-BINDING</scope>
    <source>
        <strain>K12</strain>
    </source>
</reference>
<reference key="8">
    <citation type="journal article" date="1987" name="Cell">
        <title>ATP activates dnaA protein in initiating replication of plasmids bearing the origin of the E. coli chromosome.</title>
        <authorList>
            <person name="Sekimizu K."/>
            <person name="Bramhill D."/>
            <person name="Kornberg A."/>
        </authorList>
    </citation>
    <scope>FUNCTION</scope>
    <scope>NUCLEOTIDE-BINDING</scope>
    <scope>SLOW ATPASE ACTIVITY</scope>
</reference>
<reference key="9">
    <citation type="journal article" date="1989" name="J. Biol. Chem.">
        <title>dnaA protein regulates transcriptions of the rpoH gene of Escherichia coli.</title>
        <authorList>
            <person name="Wang Q.P."/>
            <person name="Kaguni J.M."/>
        </authorList>
    </citation>
    <scope>FUNCTION AS A TRANSCRIPTIONAL REPRESSOR</scope>
    <scope>DNA-BINDING</scope>
    <source>
        <strain>K12 / AB1157</strain>
    </source>
</reference>
<reference key="10">
    <citation type="journal article" date="1998" name="J. Biol. Chem.">
        <title>Membrane-mediated release of nucleotide from an initiator of chromosomal replication, Escherichia coli DnaA, occurs with insertion of a distinct region of the protein into the lipid bilayer.</title>
        <authorList>
            <person name="Garner J."/>
            <person name="Durrer P."/>
            <person name="Kitchen J."/>
            <person name="Brunner J."/>
            <person name="Crooke E."/>
        </authorList>
    </citation>
    <scope>REJUVENATION OF ATP-DNAA</scope>
    <scope>ACTIVITY REGULATION</scope>
    <scope>SUBCELLULAR LOCATION</scope>
    <scope>MEMBRANE-ASSOCIATED DOMAIN</scope>
</reference>
<reference key="11">
    <citation type="journal article" date="1998" name="Cell">
        <title>The initiator function of DnaA protein is negatively regulated by the sliding clamp of the E. coli chromosomal replicase.</title>
        <authorList>
            <person name="Katayama T."/>
            <person name="Kubota T."/>
            <person name="Kurokawa K."/>
            <person name="Crooke E."/>
            <person name="Sekimizu K."/>
        </authorList>
    </citation>
    <scope>INACTIVATION</scope>
    <scope>ACTIVITY REGULATION</scope>
    <scope>SUBUNIT</scope>
</reference>
<reference key="12">
    <citation type="journal article" date="1997" name="Electrophoresis">
        <title>Escherichia coli proteome analysis using the gene-protein database.</title>
        <authorList>
            <person name="VanBogelen R.A."/>
            <person name="Abshire K.Z."/>
            <person name="Moldover B."/>
            <person name="Olson E.R."/>
            <person name="Neidhardt F.C."/>
        </authorList>
    </citation>
    <scope>IDENTIFICATION BY 2D-GEL</scope>
</reference>
<reference key="13">
    <citation type="journal article" date="1997" name="J. Biol. Chem.">
        <title>Role of TrfA and DnaA proteins in origin opening during initiation of DNA replication of the broad host range plasmid RK2.</title>
        <authorList>
            <person name="Konieczny I."/>
            <person name="Doran K.S."/>
            <person name="Helinski D.R."/>
            <person name="Blasina A."/>
        </authorList>
    </citation>
    <scope>FUNCTION IN PLASMID DNA REPLICATION</scope>
    <scope>DNA-BINDING</scope>
</reference>
<reference key="14">
    <citation type="journal article" date="2005" name="J. Biol. Chem.">
        <title>An essential tryptophan of Escherichia coli DnaA protein functions in oligomerization at the E. coli replication origin.</title>
        <authorList>
            <person name="Felczak M.M."/>
            <person name="Simmons L.A."/>
            <person name="Kaguni J.M."/>
        </authorList>
    </citation>
    <scope>FUNCTION IN INITIATION</scope>
    <scope>FUNCTION IN PLASMID DNA REPLICATION</scope>
    <scope>DOMAIN</scope>
    <scope>DNA-BINDING</scope>
    <scope>MUTAGENESIS OF TRP-6</scope>
</reference>
<reference key="15">
    <citation type="journal article" date="2005" name="J. Bacteriol.">
        <title>Coordinated replication and sequestration of oriC and dnaA are required for maintaining controlled once-per-cell-cycle initiation in Escherichia coli.</title>
        <authorList>
            <person name="Riber L."/>
            <person name="Lobner-Olesen A."/>
        </authorList>
    </citation>
    <scope>FUNCTION IN AUTO REGULATION OF TRANSCRIPTION</scope>
    <source>
        <strain>K12</strain>
    </source>
</reference>
<reference key="16">
    <citation type="journal article" date="2007" name="Genes Dev.">
        <title>The interaction of DiaA and DnaA regulates the replication cycle in E. coli by directly promoting ATP DnaA-specific initiation complexes.</title>
        <authorList>
            <person name="Keyamura K."/>
            <person name="Fujikawa N."/>
            <person name="Ishida T."/>
            <person name="Ozaki S."/>
            <person name="Su'etsugu M."/>
            <person name="Fujimitsu K."/>
            <person name="Kagawa W."/>
            <person name="Yokoyama S."/>
            <person name="Kurumizaka H."/>
            <person name="Katayama T."/>
        </authorList>
    </citation>
    <scope>INTERACTION WITH DIAA</scope>
    <scope>FUNCTION</scope>
</reference>
<reference key="17">
    <citation type="journal article" date="2008" name="J. Biol. Chem.">
        <title>A common mechanism for the ATP-DnaA-dependent formation of open complexes at the replication origin.</title>
        <authorList>
            <person name="Ozaki S."/>
            <person name="Kawakami H."/>
            <person name="Nakamura K."/>
            <person name="Fujikawa N."/>
            <person name="Kagawa W."/>
            <person name="Park S.Y."/>
            <person name="Yokoyama S."/>
            <person name="Kurumizaka H."/>
            <person name="Katayama T."/>
        </authorList>
    </citation>
    <scope>FUNCTION</scope>
    <scope>ATP-BINDING</scope>
    <scope>DS- AND SSDNA-BINDING</scope>
    <scope>MUTAGENESIS OF VAL-211; LYS-223; LYS-243 AND ARG-245</scope>
</reference>
<reference key="18">
    <citation type="journal article" date="2008" name="J. Biol. Chem.">
        <title>Hda monomerization by ADP binding promotes replicase clamp-mediated DnaA-ATP hydrolysis.</title>
        <authorList>
            <person name="Su'etsugu M."/>
            <person name="Nakamura K."/>
            <person name="Keyamura K."/>
            <person name="Kudo Y."/>
            <person name="Katayama T."/>
        </authorList>
    </citation>
    <scope>INACTIVATION BY RIDA COMPLEX</scope>
    <scope>ACTIVITY REGULATION</scope>
</reference>
<reference key="19">
    <citation type="journal article" date="2009" name="Genes Dev.">
        <title>Specific genomic sequences of E. coli promote replicational initiation by directly reactivating ADP-DnaA.</title>
        <authorList>
            <person name="Fujimitsu K."/>
            <person name="Senriuchi T."/>
            <person name="Katayama T."/>
        </authorList>
    </citation>
    <scope>REJUVENATION OF ATP-DNAA</scope>
    <scope>ACTIVITY REGULATION</scope>
    <scope>DNA-BINDING</scope>
    <scope>MUTAGENESIS OF ASP-269; ARG-285; ARG-399 AND THR-435</scope>
</reference>
<reference key="20">
    <citation type="journal article" date="2012" name="PLoS ONE">
        <title>Association of the chromosome replication initiator DnaA with the Escherichia coli inner membrane in vivo: quantity and mode of binding.</title>
        <authorList>
            <person name="Regev T."/>
            <person name="Myers N."/>
            <person name="Zarivach R."/>
            <person name="Fishov I."/>
        </authorList>
    </citation>
    <scope>SUBCELLULAR LOCATION</scope>
    <scope>DOMAIN</scope>
    <scope>MUTAGENESIS OF LEU-417</scope>
    <source>
        <strain>B / BL21-DE3</strain>
    </source>
</reference>
<reference key="21">
    <citation type="journal article" date="2013" name="Proc. Natl. Acad. Sci. U.S.A.">
        <title>DnaA binding locus datA promotes DnaA-ATP hydrolysis to enable cell cycle-coordinated replication initiation.</title>
        <authorList>
            <person name="Kasho K."/>
            <person name="Katayama T."/>
        </authorList>
    </citation>
    <scope>INACTIVATION BY DDHA</scope>
    <scope>ACTIVITY REGULATION</scope>
    <scope>MUTAGENESIS OF ARG-281; ARG-285; ARG-334 AND ARG-399</scope>
    <source>
        <strain>K12 / MG1655 / ATCC 47076</strain>
    </source>
</reference>
<reference key="22">
    <citation type="journal article" date="2015" name="Biosci. Rep.">
        <title>N-terminal-mediated oligomerization of DnaA drives the occupancy-dependent rejuvenation of the protein on the membrane.</title>
        <authorList>
            <person name="Aranovich A."/>
            <person name="Braier-Marcovitz S."/>
            <person name="Ansbacher E."/>
            <person name="Granek R."/>
            <person name="Parola A.H."/>
            <person name="Fishov I."/>
        </authorList>
    </citation>
    <scope>REJUVENATION OF ATP-DNAA</scope>
    <scope>ACTIVITY REGULATION</scope>
    <scope>SUBCELLULAR LOCATION</scope>
</reference>
<reference key="23">
    <citation type="journal article" date="2016" name="Sci. Rep.">
        <title>Reversible lysine acetylation is involved in DNA replication initiation by regulating activities of initiator DnaA in Escherichia coli.</title>
        <authorList>
            <person name="Zhang Q."/>
            <person name="Zhou A."/>
            <person name="Li S."/>
            <person name="Ni J."/>
            <person name="Tao J."/>
            <person name="Lu J."/>
            <person name="Wan B."/>
            <person name="Li S."/>
            <person name="Zhang J."/>
            <person name="Zhao S."/>
            <person name="Zhao G.P."/>
            <person name="Shao F."/>
            <person name="Yao Y.F."/>
        </authorList>
    </citation>
    <scope>ACETYLATION AT LYS-178</scope>
    <scope>ACTIVITY REGULATION</scope>
    <scope>MUTAGENESIS OF LYS-178</scope>
</reference>
<reference key="24">
    <citation type="journal article" date="2017" name="PLoS Genet.">
        <title>Rapid turnover of DnaA at replication origin regions contributes to initiation control of DNA replication.</title>
        <authorList>
            <person name="Schenk K."/>
            <person name="Hervas A.B."/>
            <person name="Roesch T.C."/>
            <person name="Eisemann M."/>
            <person name="Schmitt B.A."/>
            <person name="Dahlke S."/>
            <person name="Kleine-Borgmann L."/>
            <person name="Murray S.M."/>
            <person name="Graumann P.L."/>
        </authorList>
    </citation>
    <scope>SUBCELLULAR LOCATION</scope>
</reference>
<reference evidence="32" key="25">
    <citation type="journal article" date="2003" name="Nucleic Acids Res.">
        <title>Structural basis of replication origin recognition by the DnaA protein.</title>
        <authorList>
            <person name="Fujikawa N."/>
            <person name="Kurumizaka H."/>
            <person name="Nureki O."/>
            <person name="Terada T."/>
            <person name="Shirouzu M."/>
            <person name="Katayama T."/>
            <person name="Yokoyama S."/>
        </authorList>
    </citation>
    <scope>X-RAY CRYSTALLOGRAPHY (2.1 ANGSTROMS) OF 374-467 IN COMPLEX WITH DSDNA</scope>
    <scope>DOMAIN</scope>
    <scope>DSDNA-BINDING</scope>
</reference>
<reference evidence="33" key="26">
    <citation type="journal article" date="2007" name="J. Biol. Chem.">
        <title>Structure and function of DnaA N-terminal domains: specific sites and mechanisms in inter-DnaA interaction and in DnaB helicase loading on oriC.</title>
        <authorList>
            <person name="Abe Y."/>
            <person name="Jo T."/>
            <person name="Matsuda Y."/>
            <person name="Matsunaga C."/>
            <person name="Katayama T."/>
            <person name="Ueda T."/>
        </authorList>
    </citation>
    <scope>STRUCTURE BY NMR OF 2-108</scope>
    <scope>MUTAGENESIS OF GLU-21</scope>
</reference>